<feature type="chain" id="PRO_0000211501" description="Charged multivesicular body protein 5">
    <location>
        <begin position="1"/>
        <end position="219"/>
    </location>
</feature>
<feature type="region of interest" description="Disordered" evidence="4">
    <location>
        <begin position="1"/>
        <end position="21"/>
    </location>
</feature>
<feature type="region of interest" description="Disordered" evidence="4">
    <location>
        <begin position="188"/>
        <end position="219"/>
    </location>
</feature>
<feature type="coiled-coil region" evidence="3">
    <location>
        <begin position="26"/>
        <end position="179"/>
    </location>
</feature>
<feature type="compositionally biased region" description="Basic residues" evidence="4">
    <location>
        <begin position="1"/>
        <end position="10"/>
    </location>
</feature>
<feature type="modified residue" description="Phosphoserine" evidence="2">
    <location>
        <position position="86"/>
    </location>
</feature>
<sequence length="219" mass="24576">MNRFFGKAKPKAPPPSLTDCIGTVDSRAESIDKKISRLDAELVKYKDQIKKMREGPAKNMVKQKALRVLKQKRMYEQQRDNLAQQSFNMEQANYTIQSLKDTKTTVDAMKLGVKEMKKAYKEVKIDQIEDLQDQLEDMMEDANEIQEALGRSYGTPELDEDDLEAELDALGDELLADEDSSYLDEAASAPAIPEGVPTDTKNKDGVLVDEFGLPQIPAS</sequence>
<proteinExistence type="evidence at protein level"/>
<reference key="1">
    <citation type="journal article" date="2005" name="Science">
        <title>The transcriptional landscape of the mammalian genome.</title>
        <authorList>
            <person name="Carninci P."/>
            <person name="Kasukawa T."/>
            <person name="Katayama S."/>
            <person name="Gough J."/>
            <person name="Frith M.C."/>
            <person name="Maeda N."/>
            <person name="Oyama R."/>
            <person name="Ravasi T."/>
            <person name="Lenhard B."/>
            <person name="Wells C."/>
            <person name="Kodzius R."/>
            <person name="Shimokawa K."/>
            <person name="Bajic V.B."/>
            <person name="Brenner S.E."/>
            <person name="Batalov S."/>
            <person name="Forrest A.R."/>
            <person name="Zavolan M."/>
            <person name="Davis M.J."/>
            <person name="Wilming L.G."/>
            <person name="Aidinis V."/>
            <person name="Allen J.E."/>
            <person name="Ambesi-Impiombato A."/>
            <person name="Apweiler R."/>
            <person name="Aturaliya R.N."/>
            <person name="Bailey T.L."/>
            <person name="Bansal M."/>
            <person name="Baxter L."/>
            <person name="Beisel K.W."/>
            <person name="Bersano T."/>
            <person name="Bono H."/>
            <person name="Chalk A.M."/>
            <person name="Chiu K.P."/>
            <person name="Choudhary V."/>
            <person name="Christoffels A."/>
            <person name="Clutterbuck D.R."/>
            <person name="Crowe M.L."/>
            <person name="Dalla E."/>
            <person name="Dalrymple B.P."/>
            <person name="de Bono B."/>
            <person name="Della Gatta G."/>
            <person name="di Bernardo D."/>
            <person name="Down T."/>
            <person name="Engstrom P."/>
            <person name="Fagiolini M."/>
            <person name="Faulkner G."/>
            <person name="Fletcher C.F."/>
            <person name="Fukushima T."/>
            <person name="Furuno M."/>
            <person name="Futaki S."/>
            <person name="Gariboldi M."/>
            <person name="Georgii-Hemming P."/>
            <person name="Gingeras T.R."/>
            <person name="Gojobori T."/>
            <person name="Green R.E."/>
            <person name="Gustincich S."/>
            <person name="Harbers M."/>
            <person name="Hayashi Y."/>
            <person name="Hensch T.K."/>
            <person name="Hirokawa N."/>
            <person name="Hill D."/>
            <person name="Huminiecki L."/>
            <person name="Iacono M."/>
            <person name="Ikeo K."/>
            <person name="Iwama A."/>
            <person name="Ishikawa T."/>
            <person name="Jakt M."/>
            <person name="Kanapin A."/>
            <person name="Katoh M."/>
            <person name="Kawasawa Y."/>
            <person name="Kelso J."/>
            <person name="Kitamura H."/>
            <person name="Kitano H."/>
            <person name="Kollias G."/>
            <person name="Krishnan S.P."/>
            <person name="Kruger A."/>
            <person name="Kummerfeld S.K."/>
            <person name="Kurochkin I.V."/>
            <person name="Lareau L.F."/>
            <person name="Lazarevic D."/>
            <person name="Lipovich L."/>
            <person name="Liu J."/>
            <person name="Liuni S."/>
            <person name="McWilliam S."/>
            <person name="Madan Babu M."/>
            <person name="Madera M."/>
            <person name="Marchionni L."/>
            <person name="Matsuda H."/>
            <person name="Matsuzawa S."/>
            <person name="Miki H."/>
            <person name="Mignone F."/>
            <person name="Miyake S."/>
            <person name="Morris K."/>
            <person name="Mottagui-Tabar S."/>
            <person name="Mulder N."/>
            <person name="Nakano N."/>
            <person name="Nakauchi H."/>
            <person name="Ng P."/>
            <person name="Nilsson R."/>
            <person name="Nishiguchi S."/>
            <person name="Nishikawa S."/>
            <person name="Nori F."/>
            <person name="Ohara O."/>
            <person name="Okazaki Y."/>
            <person name="Orlando V."/>
            <person name="Pang K.C."/>
            <person name="Pavan W.J."/>
            <person name="Pavesi G."/>
            <person name="Pesole G."/>
            <person name="Petrovsky N."/>
            <person name="Piazza S."/>
            <person name="Reed J."/>
            <person name="Reid J.F."/>
            <person name="Ring B.Z."/>
            <person name="Ringwald M."/>
            <person name="Rost B."/>
            <person name="Ruan Y."/>
            <person name="Salzberg S.L."/>
            <person name="Sandelin A."/>
            <person name="Schneider C."/>
            <person name="Schoenbach C."/>
            <person name="Sekiguchi K."/>
            <person name="Semple C.A."/>
            <person name="Seno S."/>
            <person name="Sessa L."/>
            <person name="Sheng Y."/>
            <person name="Shibata Y."/>
            <person name="Shimada H."/>
            <person name="Shimada K."/>
            <person name="Silva D."/>
            <person name="Sinclair B."/>
            <person name="Sperling S."/>
            <person name="Stupka E."/>
            <person name="Sugiura K."/>
            <person name="Sultana R."/>
            <person name="Takenaka Y."/>
            <person name="Taki K."/>
            <person name="Tammoja K."/>
            <person name="Tan S.L."/>
            <person name="Tang S."/>
            <person name="Taylor M.S."/>
            <person name="Tegner J."/>
            <person name="Teichmann S.A."/>
            <person name="Ueda H.R."/>
            <person name="van Nimwegen E."/>
            <person name="Verardo R."/>
            <person name="Wei C.L."/>
            <person name="Yagi K."/>
            <person name="Yamanishi H."/>
            <person name="Zabarovsky E."/>
            <person name="Zhu S."/>
            <person name="Zimmer A."/>
            <person name="Hide W."/>
            <person name="Bult C."/>
            <person name="Grimmond S.M."/>
            <person name="Teasdale R.D."/>
            <person name="Liu E.T."/>
            <person name="Brusic V."/>
            <person name="Quackenbush J."/>
            <person name="Wahlestedt C."/>
            <person name="Mattick J.S."/>
            <person name="Hume D.A."/>
            <person name="Kai C."/>
            <person name="Sasaki D."/>
            <person name="Tomaru Y."/>
            <person name="Fukuda S."/>
            <person name="Kanamori-Katayama M."/>
            <person name="Suzuki M."/>
            <person name="Aoki J."/>
            <person name="Arakawa T."/>
            <person name="Iida J."/>
            <person name="Imamura K."/>
            <person name="Itoh M."/>
            <person name="Kato T."/>
            <person name="Kawaji H."/>
            <person name="Kawagashira N."/>
            <person name="Kawashima T."/>
            <person name="Kojima M."/>
            <person name="Kondo S."/>
            <person name="Konno H."/>
            <person name="Nakano K."/>
            <person name="Ninomiya N."/>
            <person name="Nishio T."/>
            <person name="Okada M."/>
            <person name="Plessy C."/>
            <person name="Shibata K."/>
            <person name="Shiraki T."/>
            <person name="Suzuki S."/>
            <person name="Tagami M."/>
            <person name="Waki K."/>
            <person name="Watahiki A."/>
            <person name="Okamura-Oho Y."/>
            <person name="Suzuki H."/>
            <person name="Kawai J."/>
            <person name="Hayashizaki Y."/>
        </authorList>
    </citation>
    <scope>NUCLEOTIDE SEQUENCE [LARGE SCALE MRNA]</scope>
    <source>
        <strain>C57BL/6J</strain>
        <tissue>Amnion</tissue>
        <tissue>Stomach</tissue>
    </source>
</reference>
<reference key="2">
    <citation type="journal article" date="2004" name="Genome Res.">
        <title>The status, quality, and expansion of the NIH full-length cDNA project: the Mammalian Gene Collection (MGC).</title>
        <authorList>
            <consortium name="The MGC Project Team"/>
        </authorList>
    </citation>
    <scope>NUCLEOTIDE SEQUENCE [LARGE SCALE MRNA]</scope>
    <source>
        <strain>FVB/N</strain>
        <tissue>Mammary tumor</tissue>
    </source>
</reference>
<reference key="3">
    <citation type="journal article" date="2010" name="Cell">
        <title>A tissue-specific atlas of mouse protein phosphorylation and expression.</title>
        <authorList>
            <person name="Huttlin E.L."/>
            <person name="Jedrychowski M.P."/>
            <person name="Elias J.E."/>
            <person name="Goswami T."/>
            <person name="Rad R."/>
            <person name="Beausoleil S.A."/>
            <person name="Villen J."/>
            <person name="Haas W."/>
            <person name="Sowa M.E."/>
            <person name="Gygi S.P."/>
        </authorList>
    </citation>
    <scope>IDENTIFICATION BY MASS SPECTROMETRY [LARGE SCALE ANALYSIS]</scope>
    <source>
        <tissue>Brain</tissue>
        <tissue>Brown adipose tissue</tissue>
        <tissue>Heart</tissue>
        <tissue>Kidney</tissue>
        <tissue>Liver</tissue>
        <tissue>Lung</tissue>
        <tissue>Pancreas</tissue>
        <tissue>Spleen</tissue>
        <tissue>Testis</tissue>
    </source>
</reference>
<keyword id="KW-0175">Coiled coil</keyword>
<keyword id="KW-0963">Cytoplasm</keyword>
<keyword id="KW-0967">Endosome</keyword>
<keyword id="KW-0472">Membrane</keyword>
<keyword id="KW-0597">Phosphoprotein</keyword>
<keyword id="KW-0653">Protein transport</keyword>
<keyword id="KW-1185">Reference proteome</keyword>
<keyword id="KW-0813">Transport</keyword>
<keyword id="KW-0832">Ubl conjugation</keyword>
<gene>
    <name type="primary">Chmp5</name>
    <name type="synonym">Snf7dc2</name>
</gene>
<name>CHMP5_MOUSE</name>
<accession>Q9D7S9</accession>
<accession>Q3UI64</accession>
<comment type="function">
    <text evidence="1">Probable peripherally associated component of the endosomal sorting required for transport complex III (ESCRT-III) which is involved in multivesicular bodies (MVBs) formation and sorting of endosomal cargo proteins into MVBs. MVBs contain intraluminal vesicles (ILVs) that are generated by invagination and scission from the limiting membrane of the endosome and mostly are delivered to lysosomes enabling degradation of membrane proteins, such as stimulated growth factor receptors, lysosomal enzymes and lipids. The MVB pathway appears to require the sequential function of ESCRT-O, -I,-II and -III complexes. ESCRT-III proteins mostly dissociate from the invaginating membrane before the ILV is released. The ESCRT machinery also functions in topologically equivalent membrane fission events, such as the terminal stages of cytokinesis. ESCRT-III proteins are believed to mediate the necessary vesicle extrusion and/or membrane fission activities, possibly in conjunction with the AAA ATPase VPS4 (By similarity).</text>
</comment>
<comment type="subunit">
    <text evidence="2">Probable peripherally associated component of the endosomal sorting required for transport complex III (ESCRT-III). ESCRT-III components are thought to multimerize to form a flat lattice on the perimeter membrane of the endosome. Several assembly forms of ESCRT-III may exist that interact and act sequentially. Interacts with VTA1. Interacts with CHMP2A. Interacts with VTA1; the interaction involves soluble CHMP5 (By similarity). Interacts with NOD2 (By similarity). Interacts with BROX (By similarity).</text>
</comment>
<comment type="subcellular location">
    <subcellularLocation>
        <location evidence="2">Cytoplasm</location>
        <location evidence="2">Cytosol</location>
    </subcellularLocation>
    <subcellularLocation>
        <location evidence="5">Endosome membrane</location>
        <topology evidence="5">Peripheral membrane protein</topology>
    </subcellularLocation>
    <subcellularLocation>
        <location evidence="2">Midbody</location>
    </subcellularLocation>
    <text evidence="2">Localizes to the midbody of dividing cells. Localized in two distinct rings on either side of the Flemming body.</text>
</comment>
<comment type="PTM">
    <text evidence="2">ISGylated. Isgylation inhibits its interaction with VTA1 (By similarity).</text>
</comment>
<comment type="similarity">
    <text evidence="5">Belongs to the SNF7 family.</text>
</comment>
<organism>
    <name type="scientific">Mus musculus</name>
    <name type="common">Mouse</name>
    <dbReference type="NCBI Taxonomy" id="10090"/>
    <lineage>
        <taxon>Eukaryota</taxon>
        <taxon>Metazoa</taxon>
        <taxon>Chordata</taxon>
        <taxon>Craniata</taxon>
        <taxon>Vertebrata</taxon>
        <taxon>Euteleostomi</taxon>
        <taxon>Mammalia</taxon>
        <taxon>Eutheria</taxon>
        <taxon>Euarchontoglires</taxon>
        <taxon>Glires</taxon>
        <taxon>Rodentia</taxon>
        <taxon>Myomorpha</taxon>
        <taxon>Muroidea</taxon>
        <taxon>Muridae</taxon>
        <taxon>Murinae</taxon>
        <taxon>Mus</taxon>
        <taxon>Mus</taxon>
    </lineage>
</organism>
<evidence type="ECO:0000250" key="1"/>
<evidence type="ECO:0000250" key="2">
    <source>
        <dbReference type="UniProtKB" id="Q9NZZ3"/>
    </source>
</evidence>
<evidence type="ECO:0000255" key="3"/>
<evidence type="ECO:0000256" key="4">
    <source>
        <dbReference type="SAM" id="MobiDB-lite"/>
    </source>
</evidence>
<evidence type="ECO:0000305" key="5"/>
<protein>
    <recommendedName>
        <fullName>Charged multivesicular body protein 5</fullName>
    </recommendedName>
    <alternativeName>
        <fullName>Chromatin-modifying protein 5</fullName>
    </alternativeName>
    <alternativeName>
        <fullName>SNF7 domain-containing protein 2</fullName>
    </alternativeName>
</protein>
<dbReference type="EMBL" id="AK008911">
    <property type="protein sequence ID" value="BAB25962.1"/>
    <property type="molecule type" value="mRNA"/>
</dbReference>
<dbReference type="EMBL" id="AK147058">
    <property type="protein sequence ID" value="BAE27642.1"/>
    <property type="molecule type" value="mRNA"/>
</dbReference>
<dbReference type="EMBL" id="BC006947">
    <property type="protein sequence ID" value="AAH06947.1"/>
    <property type="molecule type" value="mRNA"/>
</dbReference>
<dbReference type="CCDS" id="CCDS18053.1"/>
<dbReference type="RefSeq" id="NP_084090.1">
    <property type="nucleotide sequence ID" value="NM_029814.1"/>
</dbReference>
<dbReference type="BMRB" id="Q9D7S9"/>
<dbReference type="SMR" id="Q9D7S9"/>
<dbReference type="BioGRID" id="218428">
    <property type="interactions" value="16"/>
</dbReference>
<dbReference type="ComplexPortal" id="CPX-332">
    <property type="entry name" value="ESCRT-III complex, variant Chmp1b1"/>
</dbReference>
<dbReference type="ComplexPortal" id="CPX-333">
    <property type="entry name" value="ESCRT-III complex, variant Chmp1b2"/>
</dbReference>
<dbReference type="FunCoup" id="Q9D7S9">
    <property type="interactions" value="3914"/>
</dbReference>
<dbReference type="STRING" id="10090.ENSMUSP00000030128"/>
<dbReference type="iPTMnet" id="Q9D7S9"/>
<dbReference type="PhosphoSitePlus" id="Q9D7S9"/>
<dbReference type="jPOST" id="Q9D7S9"/>
<dbReference type="PaxDb" id="10090-ENSMUSP00000030128"/>
<dbReference type="PeptideAtlas" id="Q9D7S9"/>
<dbReference type="ProteomicsDB" id="281617"/>
<dbReference type="Pumba" id="Q9D7S9"/>
<dbReference type="Antibodypedia" id="25186">
    <property type="antibodies" value="233 antibodies from 28 providers"/>
</dbReference>
<dbReference type="DNASU" id="76959"/>
<dbReference type="Ensembl" id="ENSMUST00000030128.6">
    <property type="protein sequence ID" value="ENSMUSP00000030128.6"/>
    <property type="gene ID" value="ENSMUSG00000028419.6"/>
</dbReference>
<dbReference type="GeneID" id="76959"/>
<dbReference type="KEGG" id="mmu:76959"/>
<dbReference type="UCSC" id="uc008sia.1">
    <property type="organism name" value="mouse"/>
</dbReference>
<dbReference type="AGR" id="MGI:1924209"/>
<dbReference type="CTD" id="51510"/>
<dbReference type="MGI" id="MGI:1924209">
    <property type="gene designation" value="Chmp5"/>
</dbReference>
<dbReference type="VEuPathDB" id="HostDB:ENSMUSG00000028419"/>
<dbReference type="eggNOG" id="KOG1655">
    <property type="taxonomic scope" value="Eukaryota"/>
</dbReference>
<dbReference type="GeneTree" id="ENSGT00550000074817"/>
<dbReference type="HOGENOM" id="CLU_079409_1_0_1"/>
<dbReference type="InParanoid" id="Q9D7S9"/>
<dbReference type="OMA" id="GVKQMQK"/>
<dbReference type="OrthoDB" id="3973241at2759"/>
<dbReference type="PhylomeDB" id="Q9D7S9"/>
<dbReference type="TreeFam" id="TF300122"/>
<dbReference type="Reactome" id="R-MMU-917729">
    <property type="pathway name" value="Endosomal Sorting Complex Required For Transport (ESCRT)"/>
</dbReference>
<dbReference type="BioGRID-ORCS" id="76959">
    <property type="hits" value="19 hits in 82 CRISPR screens"/>
</dbReference>
<dbReference type="ChiTaRS" id="Chmp5">
    <property type="organism name" value="mouse"/>
</dbReference>
<dbReference type="PRO" id="PR:Q9D7S9"/>
<dbReference type="Proteomes" id="UP000000589">
    <property type="component" value="Chromosome 4"/>
</dbReference>
<dbReference type="RNAct" id="Q9D7S9">
    <property type="molecule type" value="protein"/>
</dbReference>
<dbReference type="Bgee" id="ENSMUSG00000028419">
    <property type="expression patterns" value="Expressed in urinary bladder urothelium and 254 other cell types or tissues"/>
</dbReference>
<dbReference type="GO" id="GO:1904930">
    <property type="term" value="C:amphisome membrane"/>
    <property type="evidence" value="ECO:0000266"/>
    <property type="project" value="ComplexPortal"/>
</dbReference>
<dbReference type="GO" id="GO:0000421">
    <property type="term" value="C:autophagosome membrane"/>
    <property type="evidence" value="ECO:0000266"/>
    <property type="project" value="ComplexPortal"/>
</dbReference>
<dbReference type="GO" id="GO:0005829">
    <property type="term" value="C:cytosol"/>
    <property type="evidence" value="ECO:0007669"/>
    <property type="project" value="UniProtKB-SubCell"/>
</dbReference>
<dbReference type="GO" id="GO:0000776">
    <property type="term" value="C:kinetochore"/>
    <property type="evidence" value="ECO:0000266"/>
    <property type="project" value="ComplexPortal"/>
</dbReference>
<dbReference type="GO" id="GO:0005828">
    <property type="term" value="C:kinetochore microtubule"/>
    <property type="evidence" value="ECO:0000266"/>
    <property type="project" value="ComplexPortal"/>
</dbReference>
<dbReference type="GO" id="GO:0005765">
    <property type="term" value="C:lysosomal membrane"/>
    <property type="evidence" value="ECO:0000266"/>
    <property type="project" value="ComplexPortal"/>
</dbReference>
<dbReference type="GO" id="GO:0030496">
    <property type="term" value="C:midbody"/>
    <property type="evidence" value="ECO:0000266"/>
    <property type="project" value="ComplexPortal"/>
</dbReference>
<dbReference type="GO" id="GO:0032585">
    <property type="term" value="C:multivesicular body membrane"/>
    <property type="evidence" value="ECO:0000266"/>
    <property type="project" value="ComplexPortal"/>
</dbReference>
<dbReference type="GO" id="GO:0005643">
    <property type="term" value="C:nuclear pore"/>
    <property type="evidence" value="ECO:0000266"/>
    <property type="project" value="ComplexPortal"/>
</dbReference>
<dbReference type="GO" id="GO:0005634">
    <property type="term" value="C:nucleus"/>
    <property type="evidence" value="ECO:0000314"/>
    <property type="project" value="MGI"/>
</dbReference>
<dbReference type="GO" id="GO:0005886">
    <property type="term" value="C:plasma membrane"/>
    <property type="evidence" value="ECO:0000266"/>
    <property type="project" value="ComplexPortal"/>
</dbReference>
<dbReference type="GO" id="GO:0097352">
    <property type="term" value="P:autophagosome maturation"/>
    <property type="evidence" value="ECO:0000266"/>
    <property type="project" value="ComplexPortal"/>
</dbReference>
<dbReference type="GO" id="GO:0006914">
    <property type="term" value="P:autophagy"/>
    <property type="evidence" value="ECO:0000266"/>
    <property type="project" value="ComplexPortal"/>
</dbReference>
<dbReference type="GO" id="GO:0071222">
    <property type="term" value="P:cellular response to lipopolysaccharide"/>
    <property type="evidence" value="ECO:0000250"/>
    <property type="project" value="UniProtKB"/>
</dbReference>
<dbReference type="GO" id="GO:0071225">
    <property type="term" value="P:cellular response to muramyl dipeptide"/>
    <property type="evidence" value="ECO:0000250"/>
    <property type="project" value="UniProtKB"/>
</dbReference>
<dbReference type="GO" id="GO:0008333">
    <property type="term" value="P:endosome to lysosome transport"/>
    <property type="evidence" value="ECO:0000315"/>
    <property type="project" value="MGI"/>
</dbReference>
<dbReference type="GO" id="GO:0030218">
    <property type="term" value="P:erythrocyte differentiation"/>
    <property type="evidence" value="ECO:0000314"/>
    <property type="project" value="MGI"/>
</dbReference>
<dbReference type="GO" id="GO:1902774">
    <property type="term" value="P:late endosome to lysosome transport"/>
    <property type="evidence" value="ECO:0000266"/>
    <property type="project" value="ComplexPortal"/>
</dbReference>
<dbReference type="GO" id="GO:0007040">
    <property type="term" value="P:lysosome organization"/>
    <property type="evidence" value="ECO:0000315"/>
    <property type="project" value="MGI"/>
</dbReference>
<dbReference type="GO" id="GO:0090148">
    <property type="term" value="P:membrane fission"/>
    <property type="evidence" value="ECO:0000303"/>
    <property type="project" value="ComplexPortal"/>
</dbReference>
<dbReference type="GO" id="GO:0061952">
    <property type="term" value="P:midbody abscission"/>
    <property type="evidence" value="ECO:0000266"/>
    <property type="project" value="ComplexPortal"/>
</dbReference>
<dbReference type="GO" id="GO:0007080">
    <property type="term" value="P:mitotic metaphase chromosome alignment"/>
    <property type="evidence" value="ECO:0000266"/>
    <property type="project" value="ComplexPortal"/>
</dbReference>
<dbReference type="GO" id="GO:0036258">
    <property type="term" value="P:multivesicular body assembly"/>
    <property type="evidence" value="ECO:0000303"/>
    <property type="project" value="ComplexPortal"/>
</dbReference>
<dbReference type="GO" id="GO:0071985">
    <property type="term" value="P:multivesicular body sorting pathway"/>
    <property type="evidence" value="ECO:0000266"/>
    <property type="project" value="ComplexPortal"/>
</dbReference>
<dbReference type="GO" id="GO:0061763">
    <property type="term" value="P:multivesicular body-lysosome fusion"/>
    <property type="evidence" value="ECO:0000304"/>
    <property type="project" value="ParkinsonsUK-UCL"/>
</dbReference>
<dbReference type="GO" id="GO:0031468">
    <property type="term" value="P:nuclear membrane reassembly"/>
    <property type="evidence" value="ECO:0000266"/>
    <property type="project" value="ComplexPortal"/>
</dbReference>
<dbReference type="GO" id="GO:0006997">
    <property type="term" value="P:nucleus organization"/>
    <property type="evidence" value="ECO:0000266"/>
    <property type="project" value="ComplexPortal"/>
</dbReference>
<dbReference type="GO" id="GO:0001778">
    <property type="term" value="P:plasma membrane repair"/>
    <property type="evidence" value="ECO:0000266"/>
    <property type="project" value="ComplexPortal"/>
</dbReference>
<dbReference type="GO" id="GO:0015031">
    <property type="term" value="P:protein transport"/>
    <property type="evidence" value="ECO:0007669"/>
    <property type="project" value="UniProtKB-KW"/>
</dbReference>
<dbReference type="GO" id="GO:0010824">
    <property type="term" value="P:regulation of centrosome duplication"/>
    <property type="evidence" value="ECO:0007669"/>
    <property type="project" value="Ensembl"/>
</dbReference>
<dbReference type="GO" id="GO:1901673">
    <property type="term" value="P:regulation of mitotic spindle assembly"/>
    <property type="evidence" value="ECO:0000266"/>
    <property type="project" value="ComplexPortal"/>
</dbReference>
<dbReference type="GO" id="GO:0001919">
    <property type="term" value="P:regulation of receptor recycling"/>
    <property type="evidence" value="ECO:0000315"/>
    <property type="project" value="MGI"/>
</dbReference>
<dbReference type="GO" id="GO:0043162">
    <property type="term" value="P:ubiquitin-dependent protein catabolic process via the multivesicular body sorting pathway"/>
    <property type="evidence" value="ECO:0000266"/>
    <property type="project" value="ComplexPortal"/>
</dbReference>
<dbReference type="GO" id="GO:0051469">
    <property type="term" value="P:vesicle fusion with vacuole"/>
    <property type="evidence" value="ECO:0000303"/>
    <property type="project" value="ComplexPortal"/>
</dbReference>
<dbReference type="GO" id="GO:0046761">
    <property type="term" value="P:viral budding from plasma membrane"/>
    <property type="evidence" value="ECO:0000266"/>
    <property type="project" value="ComplexPortal"/>
</dbReference>
<dbReference type="GO" id="GO:0039702">
    <property type="term" value="P:viral budding via host ESCRT complex"/>
    <property type="evidence" value="ECO:0000266"/>
    <property type="project" value="ComplexPortal"/>
</dbReference>
<dbReference type="Gene3D" id="6.10.250.1710">
    <property type="match status" value="1"/>
</dbReference>
<dbReference type="Gene3D" id="1.10.287.1060">
    <property type="entry name" value="ESAT-6-like"/>
    <property type="match status" value="1"/>
</dbReference>
<dbReference type="InterPro" id="IPR005024">
    <property type="entry name" value="Snf7_fam"/>
</dbReference>
<dbReference type="PANTHER" id="PTHR22761">
    <property type="entry name" value="CHARGED MULTIVESICULAR BODY PROTEIN"/>
    <property type="match status" value="1"/>
</dbReference>
<dbReference type="PANTHER" id="PTHR22761:SF12">
    <property type="entry name" value="CHARGED MULTIVESICULAR BODY PROTEIN 5"/>
    <property type="match status" value="1"/>
</dbReference>
<dbReference type="Pfam" id="PF03357">
    <property type="entry name" value="Snf7"/>
    <property type="match status" value="1"/>
</dbReference>